<organism>
    <name type="scientific">Equine herpesvirus 2 (strain 86/87)</name>
    <name type="common">EHV-2</name>
    <dbReference type="NCBI Taxonomy" id="82831"/>
    <lineage>
        <taxon>Viruses</taxon>
        <taxon>Duplodnaviria</taxon>
        <taxon>Heunggongvirae</taxon>
        <taxon>Peploviricota</taxon>
        <taxon>Herviviricetes</taxon>
        <taxon>Herpesvirales</taxon>
        <taxon>Orthoherpesviridae</taxon>
        <taxon>Gammaherpesvirinae</taxon>
        <taxon>Percavirus</taxon>
        <taxon>Percavirus equidgamma2</taxon>
        <taxon>Equid gammaherpesvirus 2</taxon>
    </lineage>
</organism>
<name>VG58_EHV2</name>
<proteinExistence type="inferred from homology"/>
<comment type="subcellular location">
    <subcellularLocation>
        <location evidence="2">Host membrane</location>
        <topology evidence="2">Multi-pass membrane protein</topology>
    </subcellularLocation>
</comment>
<comment type="similarity">
    <text evidence="2">Belongs to the herpesviridae BMRF2 family.</text>
</comment>
<accession>Q66660</accession>
<evidence type="ECO:0000255" key="1"/>
<evidence type="ECO:0000305" key="2"/>
<protein>
    <recommendedName>
        <fullName>Gene 58 protein</fullName>
    </recommendedName>
</protein>
<dbReference type="EMBL" id="U20824">
    <property type="protein sequence ID" value="AAC13846.1"/>
    <property type="molecule type" value="Genomic_DNA"/>
</dbReference>
<dbReference type="PIR" id="S55653">
    <property type="entry name" value="S55653"/>
</dbReference>
<dbReference type="KEGG" id="vg:1461053"/>
<dbReference type="Proteomes" id="UP000007083">
    <property type="component" value="Segment"/>
</dbReference>
<dbReference type="GO" id="GO:0033644">
    <property type="term" value="C:host cell membrane"/>
    <property type="evidence" value="ECO:0007669"/>
    <property type="project" value="UniProtKB-SubCell"/>
</dbReference>
<dbReference type="GO" id="GO:0016020">
    <property type="term" value="C:membrane"/>
    <property type="evidence" value="ECO:0007669"/>
    <property type="project" value="UniProtKB-KW"/>
</dbReference>
<dbReference type="InterPro" id="IPR006727">
    <property type="entry name" value="Herpes_BMRF2"/>
</dbReference>
<dbReference type="Pfam" id="PF04633">
    <property type="entry name" value="Herpes_BMRF2"/>
    <property type="match status" value="1"/>
</dbReference>
<feature type="chain" id="PRO_0000406076" description="Gene 58 protein">
    <location>
        <begin position="1"/>
        <end position="359"/>
    </location>
</feature>
<feature type="transmembrane region" description="Helical" evidence="1">
    <location>
        <begin position="12"/>
        <end position="32"/>
    </location>
</feature>
<feature type="transmembrane region" description="Helical" evidence="1">
    <location>
        <begin position="45"/>
        <end position="65"/>
    </location>
</feature>
<feature type="transmembrane region" description="Helical" evidence="1">
    <location>
        <begin position="75"/>
        <end position="95"/>
    </location>
</feature>
<feature type="transmembrane region" description="Helical" evidence="1">
    <location>
        <begin position="103"/>
        <end position="123"/>
    </location>
</feature>
<feature type="transmembrane region" description="Helical" evidence="1">
    <location>
        <begin position="132"/>
        <end position="152"/>
    </location>
</feature>
<feature type="transmembrane region" description="Helical" evidence="1">
    <location>
        <begin position="154"/>
        <end position="174"/>
    </location>
</feature>
<feature type="transmembrane region" description="Helical" evidence="1">
    <location>
        <begin position="220"/>
        <end position="240"/>
    </location>
</feature>
<feature type="transmembrane region" description="Helical" evidence="1">
    <location>
        <begin position="246"/>
        <end position="266"/>
    </location>
</feature>
<feature type="transmembrane region" description="Helical" evidence="1">
    <location>
        <begin position="271"/>
        <end position="289"/>
    </location>
</feature>
<feature type="transmembrane region" description="Helical" evidence="1">
    <location>
        <begin position="296"/>
        <end position="318"/>
    </location>
</feature>
<feature type="transmembrane region" description="Helical" evidence="1">
    <location>
        <begin position="330"/>
        <end position="350"/>
    </location>
</feature>
<reference key="1">
    <citation type="journal article" date="1995" name="J. Mol. Biol.">
        <title>The DNA sequence of equine herpesvirus 2.</title>
        <authorList>
            <person name="Telford E.A.R."/>
            <person name="Watson M.S."/>
            <person name="Aird H.C."/>
            <person name="Perry J."/>
            <person name="Davison A.J."/>
        </authorList>
    </citation>
    <scope>NUCLEOTIDE SEQUENCE [LARGE SCALE GENOMIC DNA]</scope>
</reference>
<gene>
    <name type="primary">58</name>
</gene>
<sequence length="359" mass="40463">MTPSVMDRAVLTMAAFGTGMLGAASFVWCFLFRSLFASCVLERAVDELFFWGSLCVQVMMLFFCFRKYSKTLSRYLDLICAVNIVALFGCLICLQYKMGFRTYLPILFSLNLIWLSVWLPVTFEAVYLCPPYANAYFQLGFFTATTVHYLLLSFGSVTTSFLFIPFACFLIAGLYSLRVLKKQEEFKSAILDRRAIFITRDNLYVTINFSVIPSFIGMELCVVAVMTVGFAVFMTAAGVYTDVVKVLKTYLLMFQFGTFCVGGMGYPSRKATFVYCMTACILMPLVFVLQDLTIKSVLFLAIFFLFINGVTCETTIMLAKLKKGINGPKIVLSVCLLVNICITLSLNVLYKVYIETLKK</sequence>
<organismHost>
    <name type="scientific">Equus caballus</name>
    <name type="common">Horse</name>
    <dbReference type="NCBI Taxonomy" id="9796"/>
</organismHost>
<keyword id="KW-1043">Host membrane</keyword>
<keyword id="KW-0472">Membrane</keyword>
<keyword id="KW-1185">Reference proteome</keyword>
<keyword id="KW-0812">Transmembrane</keyword>
<keyword id="KW-1133">Transmembrane helix</keyword>